<keyword id="KW-0002">3D-structure</keyword>
<keyword id="KW-0456">Lyase</keyword>
<keyword id="KW-1185">Reference proteome</keyword>
<protein>
    <recommendedName>
        <fullName evidence="1">Fumarase E</fullName>
        <ecNumber evidence="1">4.2.1.2</ecNumber>
    </recommendedName>
</protein>
<accession>Q83Q96</accession>
<accession>Q7C035</accession>
<name>FUME_SHIFL</name>
<reference key="1">
    <citation type="journal article" date="2002" name="Nucleic Acids Res.">
        <title>Genome sequence of Shigella flexneri 2a: insights into pathogenicity through comparison with genomes of Escherichia coli K12 and O157.</title>
        <authorList>
            <person name="Jin Q."/>
            <person name="Yuan Z."/>
            <person name="Xu J."/>
            <person name="Wang Y."/>
            <person name="Shen Y."/>
            <person name="Lu W."/>
            <person name="Wang J."/>
            <person name="Liu H."/>
            <person name="Yang J."/>
            <person name="Yang F."/>
            <person name="Zhang X."/>
            <person name="Zhang J."/>
            <person name="Yang G."/>
            <person name="Wu H."/>
            <person name="Qu D."/>
            <person name="Dong J."/>
            <person name="Sun L."/>
            <person name="Xue Y."/>
            <person name="Zhao A."/>
            <person name="Gao Y."/>
            <person name="Zhu J."/>
            <person name="Kan B."/>
            <person name="Ding K."/>
            <person name="Chen S."/>
            <person name="Cheng H."/>
            <person name="Yao Z."/>
            <person name="He B."/>
            <person name="Chen R."/>
            <person name="Ma D."/>
            <person name="Qiang B."/>
            <person name="Wen Y."/>
            <person name="Hou Y."/>
            <person name="Yu J."/>
        </authorList>
    </citation>
    <scope>NUCLEOTIDE SEQUENCE [LARGE SCALE GENOMIC DNA]</scope>
    <source>
        <strain>301 / Serotype 2a</strain>
    </source>
</reference>
<reference key="2">
    <citation type="journal article" date="2003" name="Infect. Immun.">
        <title>Complete genome sequence and comparative genomics of Shigella flexneri serotype 2a strain 2457T.</title>
        <authorList>
            <person name="Wei J."/>
            <person name="Goldberg M.B."/>
            <person name="Burland V."/>
            <person name="Venkatesan M.M."/>
            <person name="Deng W."/>
            <person name="Fournier G."/>
            <person name="Mayhew G.F."/>
            <person name="Plunkett G. III"/>
            <person name="Rose D.J."/>
            <person name="Darling A."/>
            <person name="Mau B."/>
            <person name="Perna N.T."/>
            <person name="Payne S.M."/>
            <person name="Runyen-Janecky L.J."/>
            <person name="Zhou S."/>
            <person name="Schwartz D.C."/>
            <person name="Blattner F.R."/>
        </authorList>
    </citation>
    <scope>NUCLEOTIDE SEQUENCE [LARGE SCALE GENOMIC DNA]</scope>
    <source>
        <strain>ATCC 700930 / 2457T / Serotype 2a</strain>
    </source>
</reference>
<reference key="3">
    <citation type="submission" date="2016-12" db="EMBL/GenBank/DDBJ databases">
        <title>Shigella draft genomes.</title>
        <authorList>
            <person name="Weis A.M."/>
            <person name="Gilpin B."/>
            <person name="Weimer B.C."/>
        </authorList>
    </citation>
    <scope>NUCLEOTIDE SEQUENCE [LARGE SCALE GENOMIC DNA]</scope>
    <source>
        <strain>BCW_4876</strain>
    </source>
</reference>
<reference key="4">
    <citation type="journal article" date="2009" name="J. Biol. Chem.">
        <title>The mannitol operon repressor MtlR belongs to a new class of transcription regulators in bacteria.</title>
        <authorList>
            <person name="Tan K."/>
            <person name="Clancy S."/>
            <person name="Borovilos M."/>
            <person name="Zhou M."/>
            <person name="Hoerer S."/>
            <person name="Moy S."/>
            <person name="Volkart L.L."/>
            <person name="Sassoon J."/>
            <person name="Baumann U."/>
            <person name="Joachimiak A."/>
        </authorList>
    </citation>
    <scope>X-RAY CRYSTALLOGRAPHY (2.5 ANGSTROMS)</scope>
    <scope>SUBUNIT</scope>
    <source>
        <strain>ATCC 700930 / 2457T / Serotype 2a</strain>
    </source>
</reference>
<sequence length="169" mass="19210">MATLTEDDVLEQLDAQDNLFSFMKTAHSILLQGIRQFLPSLFVDNDEEIVEYAVKPLLAQSGPLDDIDVALRLIYALGKMDKWLYADITHFSQYWHYLNEQDETPGFADDITWDFISNVNSITRNATLYDALKAMKFADFAVWSEARFSGMVKTALTLAVTTTLKELTP</sequence>
<organism>
    <name type="scientific">Shigella flexneri</name>
    <dbReference type="NCBI Taxonomy" id="623"/>
    <lineage>
        <taxon>Bacteria</taxon>
        <taxon>Pseudomonadati</taxon>
        <taxon>Pseudomonadota</taxon>
        <taxon>Gammaproteobacteria</taxon>
        <taxon>Enterobacterales</taxon>
        <taxon>Enterobacteriaceae</taxon>
        <taxon>Shigella</taxon>
    </lineage>
</organism>
<evidence type="ECO:0000250" key="1">
    <source>
        <dbReference type="UniProtKB" id="P11663"/>
    </source>
</evidence>
<evidence type="ECO:0000269" key="2">
    <source>
    </source>
</evidence>
<evidence type="ECO:0000303" key="3">
    <source>
    </source>
</evidence>
<evidence type="ECO:0000305" key="4"/>
<evidence type="ECO:0000312" key="5">
    <source>
        <dbReference type="EMBL" id="AAN44400.1"/>
    </source>
</evidence>
<evidence type="ECO:0000312" key="6">
    <source>
        <dbReference type="EMBL" id="AAP18223.1"/>
    </source>
</evidence>
<evidence type="ECO:0000312" key="7">
    <source>
        <dbReference type="EMBL" id="OLM67743.1"/>
    </source>
</evidence>
<evidence type="ECO:0007829" key="8">
    <source>
        <dbReference type="PDB" id="3C8G"/>
    </source>
</evidence>
<gene>
    <name evidence="1" type="primary">fumE</name>
    <name evidence="3 6" type="synonym">yggD</name>
    <name evidence="6" type="ordered locus">S3120</name>
    <name evidence="5" type="ordered locus">SF2919</name>
    <name evidence="7" type="ORF">AJR24_04990</name>
</gene>
<proteinExistence type="evidence at protein level"/>
<dbReference type="EC" id="4.2.1.2" evidence="1"/>
<dbReference type="EMBL" id="AE005674">
    <property type="protein sequence ID" value="AAN44400.1"/>
    <property type="molecule type" value="Genomic_DNA"/>
</dbReference>
<dbReference type="EMBL" id="AE014073">
    <property type="protein sequence ID" value="AAP18223.1"/>
    <property type="molecule type" value="Genomic_DNA"/>
</dbReference>
<dbReference type="EMBL" id="MSJZ01000073">
    <property type="protein sequence ID" value="OLM67743.1"/>
    <property type="molecule type" value="Genomic_DNA"/>
</dbReference>
<dbReference type="RefSeq" id="NP_708693.1">
    <property type="nucleotide sequence ID" value="NC_004337.2"/>
</dbReference>
<dbReference type="RefSeq" id="WP_000224135.1">
    <property type="nucleotide sequence ID" value="NZ_WPGW01000018.1"/>
</dbReference>
<dbReference type="PDB" id="3C8G">
    <property type="method" value="X-ray"/>
    <property type="resolution" value="2.50 A"/>
    <property type="chains" value="A/C/D=1-169"/>
</dbReference>
<dbReference type="PDBsum" id="3C8G"/>
<dbReference type="SMR" id="Q83Q96"/>
<dbReference type="STRING" id="198214.SF2919"/>
<dbReference type="PaxDb" id="198214-SF2919"/>
<dbReference type="GeneID" id="1026023"/>
<dbReference type="KEGG" id="sfl:SF2919"/>
<dbReference type="KEGG" id="sfx:S3120"/>
<dbReference type="PATRIC" id="fig|198214.7.peg.3473"/>
<dbReference type="HOGENOM" id="CLU_132701_0_0_6"/>
<dbReference type="OMA" id="VSKLMFA"/>
<dbReference type="EvolutionaryTrace" id="Q83Q96"/>
<dbReference type="Proteomes" id="UP000001006">
    <property type="component" value="Chromosome"/>
</dbReference>
<dbReference type="Proteomes" id="UP000002673">
    <property type="component" value="Chromosome"/>
</dbReference>
<dbReference type="GO" id="GO:0004333">
    <property type="term" value="F:fumarate hydratase activity"/>
    <property type="evidence" value="ECO:0007669"/>
    <property type="project" value="UniProtKB-EC"/>
</dbReference>
<dbReference type="FunFam" id="1.20.120.330:FF:000013">
    <property type="entry name" value="DNA-binding transcriptional regulator"/>
    <property type="match status" value="1"/>
</dbReference>
<dbReference type="Gene3D" id="1.20.120.330">
    <property type="entry name" value="Nucleotidyltransferases domain 2"/>
    <property type="match status" value="1"/>
</dbReference>
<dbReference type="InterPro" id="IPR007761">
    <property type="entry name" value="MtlR-like"/>
</dbReference>
<dbReference type="InterPro" id="IPR038026">
    <property type="entry name" value="MtlR-like_sf"/>
</dbReference>
<dbReference type="NCBIfam" id="NF007455">
    <property type="entry name" value="PRK10022.1"/>
    <property type="match status" value="1"/>
</dbReference>
<dbReference type="PANTHER" id="PTHR37941">
    <property type="entry name" value="FUMARASE E-RELATED"/>
    <property type="match status" value="1"/>
</dbReference>
<dbReference type="PANTHER" id="PTHR37941:SF1">
    <property type="entry name" value="FUMARASE E-RELATED"/>
    <property type="match status" value="1"/>
</dbReference>
<dbReference type="Pfam" id="PF05068">
    <property type="entry name" value="MtlR"/>
    <property type="match status" value="1"/>
</dbReference>
<dbReference type="SUPFAM" id="SSF158668">
    <property type="entry name" value="MtlR-like"/>
    <property type="match status" value="1"/>
</dbReference>
<feature type="chain" id="PRO_0000439649" description="Fumarase E">
    <location>
        <begin position="1"/>
        <end position="169"/>
    </location>
</feature>
<feature type="helix" evidence="8">
    <location>
        <begin position="6"/>
        <end position="15"/>
    </location>
</feature>
<feature type="helix" evidence="8">
    <location>
        <begin position="19"/>
        <end position="23"/>
    </location>
</feature>
<feature type="helix" evidence="8">
    <location>
        <begin position="26"/>
        <end position="37"/>
    </location>
</feature>
<feature type="helix" evidence="8">
    <location>
        <begin position="38"/>
        <end position="41"/>
    </location>
</feature>
<feature type="helix" evidence="8">
    <location>
        <begin position="47"/>
        <end position="52"/>
    </location>
</feature>
<feature type="helix" evidence="8">
    <location>
        <begin position="67"/>
        <end position="76"/>
    </location>
</feature>
<feature type="helix" evidence="8">
    <location>
        <begin position="84"/>
        <end position="100"/>
    </location>
</feature>
<feature type="helix" evidence="8">
    <location>
        <begin position="110"/>
        <end position="117"/>
    </location>
</feature>
<feature type="helix" evidence="8">
    <location>
        <begin position="120"/>
        <end position="123"/>
    </location>
</feature>
<feature type="helix" evidence="8">
    <location>
        <begin position="126"/>
        <end position="132"/>
    </location>
</feature>
<feature type="helix" evidence="8">
    <location>
        <begin position="145"/>
        <end position="166"/>
    </location>
</feature>
<comment type="function">
    <text evidence="1">In vitro catalyzes the addition of water to fumarate, forming malate. Cannot catalyze the reverse reaction. Cannot use the cis-isomer maleate as substrate.</text>
</comment>
<comment type="catalytic activity">
    <reaction evidence="1">
        <text>(S)-malate = fumarate + H2O</text>
        <dbReference type="Rhea" id="RHEA:12460"/>
        <dbReference type="ChEBI" id="CHEBI:15377"/>
        <dbReference type="ChEBI" id="CHEBI:15589"/>
        <dbReference type="ChEBI" id="CHEBI:29806"/>
        <dbReference type="EC" id="4.2.1.2"/>
    </reaction>
</comment>
<comment type="subunit">
    <text evidence="2">Homodimer.</text>
</comment>
<comment type="similarity">
    <text evidence="4">Belongs to the MtlR/FumE family.</text>
</comment>